<gene>
    <name evidence="5" type="primary">FBXW10B</name>
    <name type="synonym">C17orf1</name>
    <name type="synonym">C17orf1A</name>
    <name type="synonym">CDRT1</name>
    <name type="synonym">HREP</name>
</gene>
<feature type="chain" id="PRO_0000315833" description="F-box and WD repeat domain containing protein 10B">
    <location>
        <begin position="1"/>
        <end position="752"/>
    </location>
</feature>
<feature type="repeat" description="WD 1" evidence="1">
    <location>
        <begin position="169"/>
        <end position="206"/>
    </location>
</feature>
<feature type="repeat" description="WD 2" evidence="1">
    <location>
        <begin position="451"/>
        <end position="490"/>
    </location>
</feature>
<feature type="repeat" description="WD 3" evidence="1">
    <location>
        <begin position="493"/>
        <end position="532"/>
    </location>
</feature>
<feature type="repeat" description="WD 4" evidence="1">
    <location>
        <begin position="534"/>
        <end position="569"/>
    </location>
</feature>
<feature type="repeat" description="WD 5" evidence="1">
    <location>
        <begin position="572"/>
        <end position="609"/>
    </location>
</feature>
<feature type="repeat" description="WD 6" evidence="1">
    <location>
        <begin position="611"/>
        <end position="652"/>
    </location>
</feature>
<feature type="splice variant" id="VSP_040554" description="In isoform 2." evidence="4">
    <location>
        <begin position="1"/>
        <end position="500"/>
    </location>
</feature>
<feature type="sequence variant" id="VAR_038340" description="In dbSNP:rs8078150." evidence="3">
    <original>F</original>
    <variation>L</variation>
    <location>
        <position position="643"/>
    </location>
</feature>
<feature type="sequence conflict" description="In Ref. 1; AAD10830." evidence="4" ref="1">
    <original>C</original>
    <variation>G</variation>
    <location>
        <position position="504"/>
    </location>
</feature>
<feature type="sequence conflict" description="In Ref. 1; AAC52034." evidence="4" ref="1">
    <original>L</original>
    <variation>P</variation>
    <location>
        <position position="619"/>
    </location>
</feature>
<feature type="sequence conflict" description="In Ref. 1; AAC52034/AAD10830." evidence="4" ref="1">
    <original>V</original>
    <variation>I</variation>
    <location>
        <position position="628"/>
    </location>
</feature>
<feature type="sequence conflict" description="In Ref. 1; AAC52034/AAD10830." evidence="4" ref="1">
    <original>D</original>
    <variation>N</variation>
    <location>
        <position position="634"/>
    </location>
</feature>
<feature type="sequence conflict" description="In Ref. 1; AAC52034/AAD10830." evidence="4" ref="1">
    <original>N</original>
    <variation>H</variation>
    <location>
        <position position="644"/>
    </location>
</feature>
<feature type="sequence conflict" description="In Ref. 1; AAD10830." evidence="4" ref="1">
    <original>A</original>
    <variation>T</variation>
    <location>
        <position position="653"/>
    </location>
</feature>
<feature type="sequence conflict" description="In Ref. 1; AAD10830." evidence="4" ref="1">
    <location>
        <begin position="663"/>
        <end position="664"/>
    </location>
</feature>
<comment type="alternative products">
    <event type="alternative splicing"/>
    <isoform>
        <id>O95170-1</id>
        <name>1</name>
        <sequence type="displayed"/>
    </isoform>
    <isoform>
        <id>O95170-2</id>
        <name>2</name>
        <sequence type="described" ref="VSP_040554"/>
    </isoform>
</comment>
<comment type="tissue specificity">
    <text evidence="2 3">Expressed in pancreas, heart and skeletal muscle.</text>
</comment>
<comment type="miscellaneous">
    <text>FBXW10B gene is located centromeric to and partially within proximal CMT1A-REP element. CMT1A-REP is a complex binary repeat element flanking a 1.5-Mb DNA region duplicated in Charcot-Marie-Tooth disease type I (CMT1A) or deleted in Hereditary neuropathy (HNPP).</text>
</comment>
<comment type="sequence caution" evidence="4">
    <conflict type="frameshift">
        <sequence resource="EMBL-CDS" id="AAD10830"/>
    </conflict>
</comment>
<sequence>MENLESRLKNAPYFRCEKGTDSIPLCRKCETRVLAWKIFSTKEWFCRINDISQRRFLVGILKQLNSLYLLHYFQNILQTTQGKDFIYNRSRIDLSKKEGKVVKSSLNQMLDKTVEQKMKEILYWFANSTQWTKANYTLLLLQMCNPKLLLTAANVIRVLFLREENNISGLNQDITDVCFSPEKDHSSKSATSQVYWTAKTQHTSLPLSKAPENEHFLGAASNPEEPWRNSLRCISEMNRLFSGKADITKPGYDPCNLLVDLDDIRDLSSGFSKYRDFIRYLPIHLSKYILRMLDRHTLNKCASVSQHWAAMAQQVKMDLSAHGFIQNQITFLQGSYTRGIDPNYANKVSIPVPKMVDDGKSMRVKHPKWKLRTKNEYNLWTAYQNEETQQVLMEERNVFCGTYNVRILSDTWDQNRVIHYSGGDLIAVSSNRKIHLLDIIQVKAIPVEFRGHAGSVRALFLCEEENFLLSGSYDLSIRYWDLKSGVCTRIFGGHQGTITCMDLCKNRLVSGGRDCQVKVWDVDTGKCLKTFRHKDPILATRINDTYIVSSCERGLVKVWHIAMAQLVKTLSGHEGAVKCLFFDQWHLLSGSTDGLVMAWSMVGKYERCLMAFKHPKEVLDVSLLFLRVISACADGKIRIYNFFNGNCMKVIKANGRGDPVLSFFIQGNRISVCHISTFAKRINVGWNGIEPSATAQGGNASLTECAHVRLHIAGHLPASRLPVAAVQPMTGGMAPTTAPTHVLAMLILFSGV</sequence>
<protein>
    <recommendedName>
        <fullName evidence="4">F-box and WD repeat domain containing protein 10B</fullName>
    </recommendedName>
    <alternativeName>
        <fullName>CMT1A duplicated region transcript 1 protein</fullName>
    </alternativeName>
</protein>
<reference key="1">
    <citation type="journal article" date="1997" name="Genomics">
        <title>The Charcot-Marie-Tooth binary repeat contains a gene transcribed from the opposite strand of a partially duplicated region of the COX10 gene.</title>
        <authorList>
            <person name="Kennerson M.L."/>
            <person name="Nassif N.T."/>
            <person name="Dawkins J.L."/>
            <person name="DeKroon R.M."/>
            <person name="Yang J.G."/>
            <person name="Nicholson G.A."/>
        </authorList>
    </citation>
    <scope>NUCLEOTIDE SEQUENCE [MRNA] (ISOFORM 1)</scope>
    <scope>TISSUE SPECIFICITY</scope>
    <scope>VARIANT LEU-643</scope>
    <source>
        <tissue>Brain</tissue>
    </source>
</reference>
<reference key="2">
    <citation type="journal article" date="1998" name="Genomics">
        <title>Genomic structure and physical mapping of C17orf1: a gene associated with the proximal element of the CMT1A-REP binary repeat.</title>
        <authorList>
            <person name="Kennerson M.L."/>
            <person name="Nassif N.T."/>
            <person name="Nicholson G.A."/>
        </authorList>
    </citation>
    <scope>NUCLEOTIDE SEQUENCE [GENOMIC DNA] (ISOFORM 1)</scope>
</reference>
<reference key="3">
    <citation type="journal article" date="2006" name="Nature">
        <title>DNA sequence of human chromosome 17 and analysis of rearrangement in the human lineage.</title>
        <authorList>
            <person name="Zody M.C."/>
            <person name="Garber M."/>
            <person name="Adams D.J."/>
            <person name="Sharpe T."/>
            <person name="Harrow J."/>
            <person name="Lupski J.R."/>
            <person name="Nicholson C."/>
            <person name="Searle S.M."/>
            <person name="Wilming L."/>
            <person name="Young S.K."/>
            <person name="Abouelleil A."/>
            <person name="Allen N.R."/>
            <person name="Bi W."/>
            <person name="Bloom T."/>
            <person name="Borowsky M.L."/>
            <person name="Bugalter B.E."/>
            <person name="Butler J."/>
            <person name="Chang J.L."/>
            <person name="Chen C.-K."/>
            <person name="Cook A."/>
            <person name="Corum B."/>
            <person name="Cuomo C.A."/>
            <person name="de Jong P.J."/>
            <person name="DeCaprio D."/>
            <person name="Dewar K."/>
            <person name="FitzGerald M."/>
            <person name="Gilbert J."/>
            <person name="Gibson R."/>
            <person name="Gnerre S."/>
            <person name="Goldstein S."/>
            <person name="Grafham D.V."/>
            <person name="Grocock R."/>
            <person name="Hafez N."/>
            <person name="Hagopian D.S."/>
            <person name="Hart E."/>
            <person name="Norman C.H."/>
            <person name="Humphray S."/>
            <person name="Jaffe D.B."/>
            <person name="Jones M."/>
            <person name="Kamal M."/>
            <person name="Khodiyar V.K."/>
            <person name="LaButti K."/>
            <person name="Laird G."/>
            <person name="Lehoczky J."/>
            <person name="Liu X."/>
            <person name="Lokyitsang T."/>
            <person name="Loveland J."/>
            <person name="Lui A."/>
            <person name="Macdonald P."/>
            <person name="Major J.E."/>
            <person name="Matthews L."/>
            <person name="Mauceli E."/>
            <person name="McCarroll S.A."/>
            <person name="Mihalev A.H."/>
            <person name="Mudge J."/>
            <person name="Nguyen C."/>
            <person name="Nicol R."/>
            <person name="O'Leary S.B."/>
            <person name="Osoegawa K."/>
            <person name="Schwartz D.C."/>
            <person name="Shaw-Smith C."/>
            <person name="Stankiewicz P."/>
            <person name="Steward C."/>
            <person name="Swarbreck D."/>
            <person name="Venkataraman V."/>
            <person name="Whittaker C.A."/>
            <person name="Yang X."/>
            <person name="Zimmer A.R."/>
            <person name="Bradley A."/>
            <person name="Hubbard T."/>
            <person name="Birren B.W."/>
            <person name="Rogers J."/>
            <person name="Lander E.S."/>
            <person name="Nusbaum C."/>
        </authorList>
    </citation>
    <scope>NUCLEOTIDE SEQUENCE [LARGE SCALE GENOMIC DNA]</scope>
</reference>
<reference key="4">
    <citation type="journal article" date="2001" name="Genome Res.">
        <title>The 1.4-Mb CMT1A duplication/HNPP deletion genomic region reveals unique genome architectural features and provides insights into the recent evolution of new genes.</title>
        <authorList>
            <person name="Inoue K."/>
            <person name="Dewar K."/>
            <person name="Katsanis N."/>
            <person name="Reiter L.T."/>
            <person name="Lander E.S."/>
            <person name="Devon K.L."/>
            <person name="Wyman D.W."/>
            <person name="Lupski J.R."/>
            <person name="Birren B."/>
        </authorList>
    </citation>
    <scope>TISSUE SPECIFICITY</scope>
</reference>
<name>CDRT1_HUMAN</name>
<keyword id="KW-0025">Alternative splicing</keyword>
<keyword id="KW-1185">Reference proteome</keyword>
<keyword id="KW-0677">Repeat</keyword>
<keyword id="KW-0853">WD repeat</keyword>
<proteinExistence type="evidence at transcript level"/>
<dbReference type="EMBL" id="U43383">
    <property type="protein sequence ID" value="AAD10830.1"/>
    <property type="status" value="ALT_FRAME"/>
    <property type="molecule type" value="mRNA"/>
</dbReference>
<dbReference type="EMBL" id="U65652">
    <property type="protein sequence ID" value="AAC52034.1"/>
    <property type="molecule type" value="mRNA"/>
</dbReference>
<dbReference type="EMBL" id="AF045592">
    <property type="protein sequence ID" value="AAC69998.1"/>
    <property type="molecule type" value="Genomic_DNA"/>
</dbReference>
<dbReference type="EMBL" id="AF045588">
    <property type="protein sequence ID" value="AAC69998.1"/>
    <property type="status" value="JOINED"/>
    <property type="molecule type" value="Genomic_DNA"/>
</dbReference>
<dbReference type="EMBL" id="AF045589">
    <property type="protein sequence ID" value="AAC69998.1"/>
    <property type="status" value="JOINED"/>
    <property type="molecule type" value="Genomic_DNA"/>
</dbReference>
<dbReference type="EMBL" id="AF045590">
    <property type="protein sequence ID" value="AAC69998.1"/>
    <property type="status" value="JOINED"/>
    <property type="molecule type" value="Genomic_DNA"/>
</dbReference>
<dbReference type="EMBL" id="AF045591">
    <property type="protein sequence ID" value="AAC69998.1"/>
    <property type="status" value="JOINED"/>
    <property type="molecule type" value="Genomic_DNA"/>
</dbReference>
<dbReference type="EMBL" id="AC005324">
    <property type="status" value="NOT_ANNOTATED_CDS"/>
    <property type="molecule type" value="Genomic_DNA"/>
</dbReference>
<dbReference type="EMBL" id="AC005838">
    <property type="status" value="NOT_ANNOTATED_CDS"/>
    <property type="molecule type" value="Genomic_DNA"/>
</dbReference>
<dbReference type="CCDS" id="CCDS45619.1">
    <molecule id="O95170-1"/>
</dbReference>
<dbReference type="RefSeq" id="NP_006373.2">
    <molecule id="O95170-1"/>
    <property type="nucleotide sequence ID" value="NM_006382.4"/>
</dbReference>
<dbReference type="SMR" id="O95170"/>
<dbReference type="BioGRID" id="131888">
    <property type="interactions" value="2"/>
</dbReference>
<dbReference type="STRING" id="9606.ENSP00000379242"/>
<dbReference type="iPTMnet" id="O95170"/>
<dbReference type="PhosphoSitePlus" id="O95170"/>
<dbReference type="BioMuta" id="CDRT1"/>
<dbReference type="MassIVE" id="O95170"/>
<dbReference type="PaxDb" id="9606-ENSP00000379242"/>
<dbReference type="PeptideAtlas" id="O95170"/>
<dbReference type="ProteomicsDB" id="50684">
    <molecule id="O95170-1"/>
</dbReference>
<dbReference type="Antibodypedia" id="34849">
    <property type="antibodies" value="3 antibodies from 3 providers"/>
</dbReference>
<dbReference type="DNASU" id="374286"/>
<dbReference type="Ensembl" id="ENST00000354433.7">
    <molecule id="O95170-2"/>
    <property type="protein sequence ID" value="ENSP00000346416.3"/>
    <property type="gene ID" value="ENSG00000241322.11"/>
</dbReference>
<dbReference type="Ensembl" id="ENST00000395906.8">
    <molecule id="O95170-1"/>
    <property type="protein sequence ID" value="ENSP00000379242.4"/>
    <property type="gene ID" value="ENSG00000241322.11"/>
</dbReference>
<dbReference type="GeneID" id="374286"/>
<dbReference type="KEGG" id="hsa:374286"/>
<dbReference type="MANE-Select" id="ENST00000395906.8">
    <property type="protein sequence ID" value="ENSP00000379242.4"/>
    <property type="RefSeq nucleotide sequence ID" value="NM_006382.4"/>
    <property type="RefSeq protein sequence ID" value="NP_006373.2"/>
</dbReference>
<dbReference type="UCSC" id="uc002gov.5">
    <molecule id="O95170-1"/>
    <property type="organism name" value="human"/>
</dbReference>
<dbReference type="AGR" id="HGNC:14379"/>
<dbReference type="CTD" id="374286"/>
<dbReference type="DisGeNET" id="374286"/>
<dbReference type="GeneCards" id="FBXW10B"/>
<dbReference type="HGNC" id="HGNC:14379">
    <property type="gene designation" value="FBXW10B"/>
</dbReference>
<dbReference type="HPA" id="ENSG00000241322">
    <property type="expression patterns" value="Tissue enhanced (esophagus, testis)"/>
</dbReference>
<dbReference type="MIM" id="604596">
    <property type="type" value="gene"/>
</dbReference>
<dbReference type="neXtProt" id="NX_O95170"/>
<dbReference type="OpenTargets" id="ENSG00000241322"/>
<dbReference type="VEuPathDB" id="HostDB:ENSG00000241322"/>
<dbReference type="eggNOG" id="KOG0274">
    <property type="taxonomic scope" value="Eukaryota"/>
</dbReference>
<dbReference type="GeneTree" id="ENSGT00940000158003"/>
<dbReference type="HOGENOM" id="CLU_1102501_0_0_1"/>
<dbReference type="InParanoid" id="O95170"/>
<dbReference type="OMA" id="EIWKWFS"/>
<dbReference type="PAN-GO" id="O95170">
    <property type="GO annotations" value="0 GO annotations based on evolutionary models"/>
</dbReference>
<dbReference type="PhylomeDB" id="O95170"/>
<dbReference type="TreeFam" id="TF329175"/>
<dbReference type="PathwayCommons" id="O95170"/>
<dbReference type="SignaLink" id="O95170"/>
<dbReference type="BioGRID-ORCS" id="374286">
    <property type="hits" value="14 hits in 1112 CRISPR screens"/>
</dbReference>
<dbReference type="ChiTaRS" id="CDRT1">
    <property type="organism name" value="human"/>
</dbReference>
<dbReference type="GenomeRNAi" id="374286"/>
<dbReference type="Pharos" id="O95170">
    <property type="development level" value="Tdark"/>
</dbReference>
<dbReference type="PRO" id="PR:O95170"/>
<dbReference type="Proteomes" id="UP000005640">
    <property type="component" value="Chromosome 17"/>
</dbReference>
<dbReference type="RNAct" id="O95170">
    <property type="molecule type" value="protein"/>
</dbReference>
<dbReference type="Bgee" id="ENSG00000241322">
    <property type="expression patterns" value="Expressed in lower esophagus mucosa and 101 other cell types or tissues"/>
</dbReference>
<dbReference type="ExpressionAtlas" id="O95170">
    <property type="expression patterns" value="baseline and differential"/>
</dbReference>
<dbReference type="CDD" id="cd22136">
    <property type="entry name" value="F-box_FBXW10"/>
    <property type="match status" value="1"/>
</dbReference>
<dbReference type="CDD" id="cd00200">
    <property type="entry name" value="WD40"/>
    <property type="match status" value="1"/>
</dbReference>
<dbReference type="Gene3D" id="1.20.1280.50">
    <property type="match status" value="1"/>
</dbReference>
<dbReference type="Gene3D" id="2.130.10.10">
    <property type="entry name" value="YVTN repeat-like/Quinoprotein amine dehydrogenase"/>
    <property type="match status" value="1"/>
</dbReference>
<dbReference type="InterPro" id="IPR036047">
    <property type="entry name" value="F-box-like_dom_sf"/>
</dbReference>
<dbReference type="InterPro" id="IPR020472">
    <property type="entry name" value="G-protein_beta_WD-40_rep"/>
</dbReference>
<dbReference type="InterPro" id="IPR051075">
    <property type="entry name" value="SCF_subunit_WD-repeat"/>
</dbReference>
<dbReference type="InterPro" id="IPR015943">
    <property type="entry name" value="WD40/YVTN_repeat-like_dom_sf"/>
</dbReference>
<dbReference type="InterPro" id="IPR019775">
    <property type="entry name" value="WD40_repeat_CS"/>
</dbReference>
<dbReference type="InterPro" id="IPR036322">
    <property type="entry name" value="WD40_repeat_dom_sf"/>
</dbReference>
<dbReference type="InterPro" id="IPR001680">
    <property type="entry name" value="WD40_rpt"/>
</dbReference>
<dbReference type="PANTHER" id="PTHR19872:SF7">
    <property type="entry name" value="F-BOX AND WD REPEAT DOMAIN CONTAINING PROTEIN 10B-RELATED"/>
    <property type="match status" value="1"/>
</dbReference>
<dbReference type="PANTHER" id="PTHR19872">
    <property type="entry name" value="UBIQUITIN LIGASE SPECIFICITY FACTOR/HREP PROTEIN"/>
    <property type="match status" value="1"/>
</dbReference>
<dbReference type="Pfam" id="PF00400">
    <property type="entry name" value="WD40"/>
    <property type="match status" value="3"/>
</dbReference>
<dbReference type="PRINTS" id="PR00320">
    <property type="entry name" value="GPROTEINBRPT"/>
</dbReference>
<dbReference type="SMART" id="SM00320">
    <property type="entry name" value="WD40"/>
    <property type="match status" value="5"/>
</dbReference>
<dbReference type="SUPFAM" id="SSF81383">
    <property type="entry name" value="F-box domain"/>
    <property type="match status" value="1"/>
</dbReference>
<dbReference type="SUPFAM" id="SSF50978">
    <property type="entry name" value="WD40 repeat-like"/>
    <property type="match status" value="1"/>
</dbReference>
<dbReference type="PROSITE" id="PS00678">
    <property type="entry name" value="WD_REPEATS_1"/>
    <property type="match status" value="1"/>
</dbReference>
<dbReference type="PROSITE" id="PS50082">
    <property type="entry name" value="WD_REPEATS_2"/>
    <property type="match status" value="3"/>
</dbReference>
<dbReference type="PROSITE" id="PS50294">
    <property type="entry name" value="WD_REPEATS_REGION"/>
    <property type="match status" value="1"/>
</dbReference>
<accession>O95170</accession>
<accession>O43848</accession>
<accession>O95611</accession>
<evidence type="ECO:0000255" key="1"/>
<evidence type="ECO:0000269" key="2">
    <source>
    </source>
</evidence>
<evidence type="ECO:0000269" key="3">
    <source>
    </source>
</evidence>
<evidence type="ECO:0000305" key="4"/>
<evidence type="ECO:0000312" key="5">
    <source>
        <dbReference type="HGNC" id="HGNC:14379"/>
    </source>
</evidence>
<organism>
    <name type="scientific">Homo sapiens</name>
    <name type="common">Human</name>
    <dbReference type="NCBI Taxonomy" id="9606"/>
    <lineage>
        <taxon>Eukaryota</taxon>
        <taxon>Metazoa</taxon>
        <taxon>Chordata</taxon>
        <taxon>Craniata</taxon>
        <taxon>Vertebrata</taxon>
        <taxon>Euteleostomi</taxon>
        <taxon>Mammalia</taxon>
        <taxon>Eutheria</taxon>
        <taxon>Euarchontoglires</taxon>
        <taxon>Primates</taxon>
        <taxon>Haplorrhini</taxon>
        <taxon>Catarrhini</taxon>
        <taxon>Hominidae</taxon>
        <taxon>Homo</taxon>
    </lineage>
</organism>